<sequence length="245" mass="28465">MDLENFLLGIPIVTRYWFLASTIIPLLGRFGFINVQWMFLQWDLVVNKFQFWRPLTALIYYPVTPQTGFHWLMMCYFLYNYSKALESETYRGRSADYLFMLIFNWFFCSGLCMALDIYFLLEPMVISVLYVWCQVNKDTIVSFWFGMRFPARYLPWVLWGFNAVLRGGGTNELVGILVGHAYFFVALKYPDEYGVDLISTPEFLHRLIPDEDGGIHGQDGNIRGARQQPRGHQWPGGVGARLGGN</sequence>
<dbReference type="EMBL" id="Z78418">
    <property type="protein sequence ID" value="CAB01696.1"/>
    <property type="molecule type" value="Genomic_DNA"/>
</dbReference>
<dbReference type="PIR" id="T21337">
    <property type="entry name" value="T21337"/>
</dbReference>
<dbReference type="RefSeq" id="NP_492721.1">
    <property type="nucleotide sequence ID" value="NM_060320.8"/>
</dbReference>
<dbReference type="SMR" id="Q93561"/>
<dbReference type="BioGRID" id="38331">
    <property type="interactions" value="8"/>
</dbReference>
<dbReference type="DIP" id="DIP-25923N"/>
<dbReference type="FunCoup" id="Q93561">
    <property type="interactions" value="2974"/>
</dbReference>
<dbReference type="IntAct" id="Q93561">
    <property type="interactions" value="3"/>
</dbReference>
<dbReference type="STRING" id="6239.F25D7.1.1"/>
<dbReference type="PaxDb" id="6239-F25D7.1.1"/>
<dbReference type="PeptideAtlas" id="Q93561"/>
<dbReference type="EnsemblMetazoa" id="F25D7.1.1">
    <property type="protein sequence ID" value="F25D7.1.1"/>
    <property type="gene ID" value="WBGene00000843"/>
</dbReference>
<dbReference type="GeneID" id="172915"/>
<dbReference type="KEGG" id="cel:CELE_F25D7.1"/>
<dbReference type="UCSC" id="F25D7.1.1">
    <property type="organism name" value="c. elegans"/>
</dbReference>
<dbReference type="AGR" id="WB:WBGene00000843"/>
<dbReference type="CTD" id="172915"/>
<dbReference type="WormBase" id="F25D7.1">
    <property type="protein sequence ID" value="CE09629"/>
    <property type="gene ID" value="WBGene00000843"/>
    <property type="gene designation" value="cup-2"/>
</dbReference>
<dbReference type="eggNOG" id="KOG0858">
    <property type="taxonomic scope" value="Eukaryota"/>
</dbReference>
<dbReference type="GeneTree" id="ENSGT00530000063156"/>
<dbReference type="HOGENOM" id="CLU_051898_3_1_1"/>
<dbReference type="InParanoid" id="Q93561"/>
<dbReference type="OMA" id="LWRCVTS"/>
<dbReference type="OrthoDB" id="19102at2759"/>
<dbReference type="PhylomeDB" id="Q93561"/>
<dbReference type="Reactome" id="R-CEL-382556">
    <property type="pathway name" value="ABC-family proteins mediated transport"/>
</dbReference>
<dbReference type="Reactome" id="R-CEL-532668">
    <property type="pathway name" value="N-glycan trimming in the ER and Calnexin/Calreticulin cycle"/>
</dbReference>
<dbReference type="PRO" id="PR:Q93561"/>
<dbReference type="Proteomes" id="UP000001940">
    <property type="component" value="Chromosome I"/>
</dbReference>
<dbReference type="Bgee" id="WBGene00000843">
    <property type="expression patterns" value="Expressed in adult organism and 4 other cell types or tissues"/>
</dbReference>
<dbReference type="GO" id="GO:0005769">
    <property type="term" value="C:early endosome"/>
    <property type="evidence" value="ECO:0000314"/>
    <property type="project" value="WormBase"/>
</dbReference>
<dbReference type="GO" id="GO:0005783">
    <property type="term" value="C:endoplasmic reticulum"/>
    <property type="evidence" value="ECO:0000314"/>
    <property type="project" value="WormBase"/>
</dbReference>
<dbReference type="GO" id="GO:0005789">
    <property type="term" value="C:endoplasmic reticulum membrane"/>
    <property type="evidence" value="ECO:0000318"/>
    <property type="project" value="GO_Central"/>
</dbReference>
<dbReference type="GO" id="GO:0005768">
    <property type="term" value="C:endosome"/>
    <property type="evidence" value="ECO:0000314"/>
    <property type="project" value="WormBase"/>
</dbReference>
<dbReference type="GO" id="GO:0043229">
    <property type="term" value="C:intracellular organelle"/>
    <property type="evidence" value="ECO:0000314"/>
    <property type="project" value="WormBase"/>
</dbReference>
<dbReference type="GO" id="GO:0097038">
    <property type="term" value="C:perinuclear endoplasmic reticulum"/>
    <property type="evidence" value="ECO:0000314"/>
    <property type="project" value="WormBase"/>
</dbReference>
<dbReference type="GO" id="GO:0005047">
    <property type="term" value="F:signal recognition particle binding"/>
    <property type="evidence" value="ECO:0000250"/>
    <property type="project" value="UniProtKB"/>
</dbReference>
<dbReference type="GO" id="GO:0006897">
    <property type="term" value="P:endocytosis"/>
    <property type="evidence" value="ECO:0000315"/>
    <property type="project" value="WormBase"/>
</dbReference>
<dbReference type="GO" id="GO:0030968">
    <property type="term" value="P:endoplasmic reticulum unfolded protein response"/>
    <property type="evidence" value="ECO:0000318"/>
    <property type="project" value="GO_Central"/>
</dbReference>
<dbReference type="GO" id="GO:0036503">
    <property type="term" value="P:ERAD pathway"/>
    <property type="evidence" value="ECO:0000318"/>
    <property type="project" value="GO_Central"/>
</dbReference>
<dbReference type="GO" id="GO:0036498">
    <property type="term" value="P:IRE1-mediated unfolded protein response"/>
    <property type="evidence" value="ECO:0007007"/>
    <property type="project" value="WormBase"/>
</dbReference>
<dbReference type="GO" id="GO:0015031">
    <property type="term" value="P:protein transport"/>
    <property type="evidence" value="ECO:0007669"/>
    <property type="project" value="UniProtKB-KW"/>
</dbReference>
<dbReference type="GO" id="GO:0051788">
    <property type="term" value="P:response to misfolded protein"/>
    <property type="evidence" value="ECO:0000315"/>
    <property type="project" value="WormBase"/>
</dbReference>
<dbReference type="InterPro" id="IPR007599">
    <property type="entry name" value="DER1"/>
</dbReference>
<dbReference type="InterPro" id="IPR035952">
    <property type="entry name" value="Rhomboid-like_sf"/>
</dbReference>
<dbReference type="PANTHER" id="PTHR11009">
    <property type="entry name" value="DER1-LIKE PROTEIN, DERLIN"/>
    <property type="match status" value="1"/>
</dbReference>
<dbReference type="Pfam" id="PF04511">
    <property type="entry name" value="DER1"/>
    <property type="match status" value="1"/>
</dbReference>
<dbReference type="SUPFAM" id="SSF144091">
    <property type="entry name" value="Rhomboid-like"/>
    <property type="match status" value="1"/>
</dbReference>
<gene>
    <name evidence="9" type="primary">cup-2</name>
    <name type="synonym">der-1</name>
    <name evidence="9" type="ORF">F25D7.1</name>
</gene>
<feature type="chain" id="PRO_0000219050" description="Derlin-1">
    <location>
        <begin position="1"/>
        <end position="245"/>
    </location>
</feature>
<feature type="topological domain" description="Cytoplasmic" evidence="2">
    <location>
        <begin position="1"/>
        <end position="5"/>
    </location>
</feature>
<feature type="transmembrane region" description="Helical; Name=1" evidence="2">
    <location>
        <begin position="6"/>
        <end position="26"/>
    </location>
</feature>
<feature type="topological domain" description="Lumenal" evidence="2">
    <location>
        <begin position="27"/>
        <end position="57"/>
    </location>
</feature>
<feature type="transmembrane region" description="Helical; Name=2" evidence="2">
    <location>
        <begin position="58"/>
        <end position="78"/>
    </location>
</feature>
<feature type="topological domain" description="Cytoplasmic" evidence="2">
    <location>
        <begin position="79"/>
        <end position="100"/>
    </location>
</feature>
<feature type="transmembrane region" description="Helical; Name=3" evidence="2">
    <location>
        <begin position="101"/>
        <end position="121"/>
    </location>
</feature>
<feature type="topological domain" description="Lumenal" evidence="2">
    <location>
        <begin position="122"/>
        <end position="166"/>
    </location>
</feature>
<feature type="transmembrane region" description="Helical; Name=4" evidence="2">
    <location>
        <begin position="167"/>
        <end position="187"/>
    </location>
</feature>
<feature type="topological domain" description="Cytoplasmic" evidence="2">
    <location>
        <begin position="188"/>
        <end position="245"/>
    </location>
</feature>
<feature type="region of interest" description="Disordered" evidence="3">
    <location>
        <begin position="218"/>
        <end position="245"/>
    </location>
</feature>
<feature type="compositionally biased region" description="Gly residues" evidence="3">
    <location>
        <begin position="234"/>
        <end position="245"/>
    </location>
</feature>
<keyword id="KW-0256">Endoplasmic reticulum</keyword>
<keyword id="KW-0472">Membrane</keyword>
<keyword id="KW-0653">Protein transport</keyword>
<keyword id="KW-1185">Reference proteome</keyword>
<keyword id="KW-0346">Stress response</keyword>
<keyword id="KW-0812">Transmembrane</keyword>
<keyword id="KW-1133">Transmembrane helix</keyword>
<keyword id="KW-0813">Transport</keyword>
<organism>
    <name type="scientific">Caenorhabditis elegans</name>
    <dbReference type="NCBI Taxonomy" id="6239"/>
    <lineage>
        <taxon>Eukaryota</taxon>
        <taxon>Metazoa</taxon>
        <taxon>Ecdysozoa</taxon>
        <taxon>Nematoda</taxon>
        <taxon>Chromadorea</taxon>
        <taxon>Rhabditida</taxon>
        <taxon>Rhabditina</taxon>
        <taxon>Rhabditomorpha</taxon>
        <taxon>Rhabditoidea</taxon>
        <taxon>Rhabditidae</taxon>
        <taxon>Peloderinae</taxon>
        <taxon>Caenorhabditis</taxon>
    </lineage>
</organism>
<accession>Q93561</accession>
<comment type="function">
    <text evidence="4 5">Specifically required for the degradation process of misfolded endoplasmic reticulum (ER) luminal proteins. Participates in the transfer of misfolded proteins from the ER to the cytosol, where they are destroyed by the proteasome in a ubiquitin-dependent manner.</text>
</comment>
<comment type="subcellular location">
    <subcellularLocation>
        <location evidence="1">Endoplasmic reticulum membrane</location>
        <topology evidence="1">Multi-pass membrane protein</topology>
    </subcellularLocation>
</comment>
<comment type="induction">
    <text evidence="5">By endoplasmic reticulum stress.</text>
</comment>
<comment type="disruption phenotype">
    <text evidence="4">Worms exhibit coelomocyte uptake defective (cup) phenotypes. Coelomocytes are scavenger cells that continuously and non-specifically endocytose fluid from the pseudocoelom (body cavity). Endocytosis by coelomocytes is not essential for growth or survival.</text>
</comment>
<comment type="similarity">
    <text evidence="8">Belongs to the derlin family.</text>
</comment>
<evidence type="ECO:0000250" key="1">
    <source>
        <dbReference type="UniProtKB" id="Q9BUN8"/>
    </source>
</evidence>
<evidence type="ECO:0000255" key="2"/>
<evidence type="ECO:0000256" key="3">
    <source>
        <dbReference type="SAM" id="MobiDB-lite"/>
    </source>
</evidence>
<evidence type="ECO:0000269" key="4">
    <source>
    </source>
</evidence>
<evidence type="ECO:0000269" key="5">
    <source>
    </source>
</evidence>
<evidence type="ECO:0000303" key="6">
    <source>
    </source>
</evidence>
<evidence type="ECO:0000303" key="7">
    <source>
    </source>
</evidence>
<evidence type="ECO:0000305" key="8"/>
<evidence type="ECO:0000312" key="9">
    <source>
        <dbReference type="WormBase" id="F25D7.1"/>
    </source>
</evidence>
<protein>
    <recommendedName>
        <fullName evidence="8">Derlin-1</fullName>
    </recommendedName>
    <alternativeName>
        <fullName evidence="6">Coelomocyte uptake defective protein 2</fullName>
    </alternativeName>
    <alternativeName>
        <fullName evidence="7">DER1-like protein 1</fullName>
    </alternativeName>
    <alternativeName>
        <fullName evidence="7">cDerlin-1</fullName>
    </alternativeName>
</protein>
<reference key="1">
    <citation type="journal article" date="1998" name="Science">
        <title>Genome sequence of the nematode C. elegans: a platform for investigating biology.</title>
        <authorList>
            <consortium name="The C. elegans sequencing consortium"/>
        </authorList>
    </citation>
    <scope>NUCLEOTIDE SEQUENCE [LARGE SCALE GENOMIC DNA]</scope>
    <source>
        <strain>Bristol N2</strain>
    </source>
</reference>
<reference key="2">
    <citation type="journal article" date="2001" name="Genetics">
        <title>Genetic analysis of endocytosis in Caenorhabditis elegans: coelomocyte uptake defective mutants.</title>
        <authorList>
            <person name="Fares H."/>
            <person name="Greenwald I."/>
        </authorList>
    </citation>
    <scope>FUNCTION</scope>
    <scope>DISRUPTION PHENOTYPE</scope>
</reference>
<reference key="3">
    <citation type="journal article" date="2004" name="Nature">
        <title>A membrane protein complex mediates retro-translocation from the ER lumen into the cytosol.</title>
        <authorList>
            <person name="Ye Y."/>
            <person name="Shibata Y."/>
            <person name="Yun C."/>
            <person name="Ron D."/>
            <person name="Rapoport T.A."/>
        </authorList>
    </citation>
    <scope>FUNCTION</scope>
    <scope>INDUCTION</scope>
</reference>
<name>DERL1_CAEEL</name>
<proteinExistence type="evidence at transcript level"/>